<keyword id="KW-1003">Cell membrane</keyword>
<keyword id="KW-0449">Lipoprotein</keyword>
<keyword id="KW-0472">Membrane</keyword>
<keyword id="KW-0564">Palmitate</keyword>
<keyword id="KW-1185">Reference proteome</keyword>
<keyword id="KW-0732">Signal</keyword>
<reference key="1">
    <citation type="journal article" date="1998" name="Nature">
        <title>Deciphering the biology of Mycobacterium tuberculosis from the complete genome sequence.</title>
        <authorList>
            <person name="Cole S.T."/>
            <person name="Brosch R."/>
            <person name="Parkhill J."/>
            <person name="Garnier T."/>
            <person name="Churcher C.M."/>
            <person name="Harris D.E."/>
            <person name="Gordon S.V."/>
            <person name="Eiglmeier K."/>
            <person name="Gas S."/>
            <person name="Barry C.E. III"/>
            <person name="Tekaia F."/>
            <person name="Badcock K."/>
            <person name="Basham D."/>
            <person name="Brown D."/>
            <person name="Chillingworth T."/>
            <person name="Connor R."/>
            <person name="Davies R.M."/>
            <person name="Devlin K."/>
            <person name="Feltwell T."/>
            <person name="Gentles S."/>
            <person name="Hamlin N."/>
            <person name="Holroyd S."/>
            <person name="Hornsby T."/>
            <person name="Jagels K."/>
            <person name="Krogh A."/>
            <person name="McLean J."/>
            <person name="Moule S."/>
            <person name="Murphy L.D."/>
            <person name="Oliver S."/>
            <person name="Osborne J."/>
            <person name="Quail M.A."/>
            <person name="Rajandream M.A."/>
            <person name="Rogers J."/>
            <person name="Rutter S."/>
            <person name="Seeger K."/>
            <person name="Skelton S."/>
            <person name="Squares S."/>
            <person name="Squares R."/>
            <person name="Sulston J.E."/>
            <person name="Taylor K."/>
            <person name="Whitehead S."/>
            <person name="Barrell B.G."/>
        </authorList>
    </citation>
    <scope>NUCLEOTIDE SEQUENCE [LARGE SCALE GENOMIC DNA]</scope>
    <source>
        <strain>ATCC 25618 / H37Rv</strain>
    </source>
</reference>
<feature type="signal peptide" evidence="1">
    <location>
        <begin position="1"/>
        <end position="32"/>
    </location>
</feature>
<feature type="chain" id="PRO_0000361671" description="Putative lipoprotein LppB">
    <location>
        <begin position="33"/>
        <end position="220"/>
    </location>
</feature>
<feature type="lipid moiety-binding region" description="N-palmitoyl cysteine" evidence="1">
    <location>
        <position position="33"/>
    </location>
</feature>
<feature type="lipid moiety-binding region" description="S-diacylglycerol cysteine" evidence="1">
    <location>
        <position position="33"/>
    </location>
</feature>
<evidence type="ECO:0000255" key="1"/>
<evidence type="ECO:0000305" key="2"/>
<accession>P9WK79</accession>
<accession>L0TBI8</accession>
<accession>P95009</accession>
<accession>Q7D6Y3</accession>
<name>LPPB_MYCTU</name>
<comment type="subcellular location">
    <subcellularLocation>
        <location evidence="2">Cell membrane</location>
        <topology evidence="2">Lipid-anchor</topology>
    </subcellularLocation>
</comment>
<comment type="similarity">
    <text evidence="2">Belongs to the mycobacteriales LppA/LppB family.</text>
</comment>
<proteinExistence type="inferred from homology"/>
<gene>
    <name type="primary">lppB</name>
    <name type="ordered locus">Rv2544</name>
</gene>
<organism>
    <name type="scientific">Mycobacterium tuberculosis (strain ATCC 25618 / H37Rv)</name>
    <dbReference type="NCBI Taxonomy" id="83332"/>
    <lineage>
        <taxon>Bacteria</taxon>
        <taxon>Bacillati</taxon>
        <taxon>Actinomycetota</taxon>
        <taxon>Actinomycetes</taxon>
        <taxon>Mycobacteriales</taxon>
        <taxon>Mycobacteriaceae</taxon>
        <taxon>Mycobacterium</taxon>
        <taxon>Mycobacterium tuberculosis complex</taxon>
    </lineage>
</organism>
<protein>
    <recommendedName>
        <fullName>Putative lipoprotein LppB</fullName>
    </recommendedName>
</protein>
<sequence length="220" mass="24193">MIAPQPIPRTLPRWQRIVALTMIGISTALIGGCTMGQNPDKSPHLTGEQKIQLIDSMRHKGSYEAARERLTATAQIIADRVSAAIPGQTWKFNDDSYGQDFYRNGSLCKELSADIARRPMAKPVDFGSTFSAEDFKIAANIVREEAAKYGVTTESSLFNESAKRDYDVQGNGYEFNLGQIKFATLNITGDCFLLQKVLDLPAGQLPPEPPIWPTTSTPTP</sequence>
<dbReference type="EMBL" id="AL123456">
    <property type="protein sequence ID" value="CCP45339.1"/>
    <property type="molecule type" value="Genomic_DNA"/>
</dbReference>
<dbReference type="PIR" id="D70659">
    <property type="entry name" value="D70659"/>
</dbReference>
<dbReference type="RefSeq" id="NP_217060.1">
    <property type="nucleotide sequence ID" value="NC_000962.3"/>
</dbReference>
<dbReference type="RefSeq" id="WP_003900848.1">
    <property type="nucleotide sequence ID" value="NZ_NVQJ01000032.1"/>
</dbReference>
<dbReference type="SMR" id="P9WK79"/>
<dbReference type="STRING" id="83332.Rv2544"/>
<dbReference type="PaxDb" id="83332-Rv2544"/>
<dbReference type="DNASU" id="888054"/>
<dbReference type="GeneID" id="888054"/>
<dbReference type="KEGG" id="mtu:Rv2544"/>
<dbReference type="KEGG" id="mtv:RVBD_2544"/>
<dbReference type="TubercuList" id="Rv2544"/>
<dbReference type="eggNOG" id="ENOG5031J3X">
    <property type="taxonomic scope" value="Bacteria"/>
</dbReference>
<dbReference type="InParanoid" id="P9WK79"/>
<dbReference type="OrthoDB" id="4619512at2"/>
<dbReference type="PhylomeDB" id="P9WK79"/>
<dbReference type="Proteomes" id="UP000001584">
    <property type="component" value="Chromosome"/>
</dbReference>
<dbReference type="GO" id="GO:0005576">
    <property type="term" value="C:extracellular region"/>
    <property type="evidence" value="ECO:0007005"/>
    <property type="project" value="MTBBASE"/>
</dbReference>
<dbReference type="GO" id="GO:0005886">
    <property type="term" value="C:plasma membrane"/>
    <property type="evidence" value="ECO:0007669"/>
    <property type="project" value="UniProtKB-SubCell"/>
</dbReference>
<dbReference type="FunFam" id="3.30.2030.20:FF:000001">
    <property type="entry name" value="Putative lipoprotein LppB"/>
    <property type="match status" value="1"/>
</dbReference>
<dbReference type="Gene3D" id="3.30.2030.20">
    <property type="match status" value="1"/>
</dbReference>
<dbReference type="InterPro" id="IPR032018">
    <property type="entry name" value="LppA/LppB/LprP"/>
</dbReference>
<dbReference type="Pfam" id="PF16708">
    <property type="entry name" value="LppA"/>
    <property type="match status" value="1"/>
</dbReference>